<sequence>MISDIRKDAEVRMEKCVEAFKTQISKVRTGRASPSLLDGIVVEYYGTPTPLRQLASVTVEDSRTLKINVFDRSMGPAVEKAIMASDLGLNPSSAGTDIRVPLPPLTEERRKDLTKIVRGEAEQARVAVRNVRRDANDKVKALLKDKAISEDDDRRSQEEVQKMTDAAIKKVDAALADKEAELMQF</sequence>
<accession>A9MPI9</accession>
<gene>
    <name evidence="1" type="primary">frr</name>
    <name type="ordered locus">SARI_02783</name>
</gene>
<proteinExistence type="inferred from homology"/>
<organism>
    <name type="scientific">Salmonella arizonae (strain ATCC BAA-731 / CDC346-86 / RSK2980)</name>
    <dbReference type="NCBI Taxonomy" id="41514"/>
    <lineage>
        <taxon>Bacteria</taxon>
        <taxon>Pseudomonadati</taxon>
        <taxon>Pseudomonadota</taxon>
        <taxon>Gammaproteobacteria</taxon>
        <taxon>Enterobacterales</taxon>
        <taxon>Enterobacteriaceae</taxon>
        <taxon>Salmonella</taxon>
    </lineage>
</organism>
<reference key="1">
    <citation type="submission" date="2007-11" db="EMBL/GenBank/DDBJ databases">
        <authorList>
            <consortium name="The Salmonella enterica serovar Arizonae Genome Sequencing Project"/>
            <person name="McClelland M."/>
            <person name="Sanderson E.K."/>
            <person name="Porwollik S."/>
            <person name="Spieth J."/>
            <person name="Clifton W.S."/>
            <person name="Fulton R."/>
            <person name="Chunyan W."/>
            <person name="Wollam A."/>
            <person name="Shah N."/>
            <person name="Pepin K."/>
            <person name="Bhonagiri V."/>
            <person name="Nash W."/>
            <person name="Johnson M."/>
            <person name="Thiruvilangam P."/>
            <person name="Wilson R."/>
        </authorList>
    </citation>
    <scope>NUCLEOTIDE SEQUENCE [LARGE SCALE GENOMIC DNA]</scope>
    <source>
        <strain>ATCC BAA-731 / CDC346-86 / RSK2980</strain>
    </source>
</reference>
<feature type="chain" id="PRO_1000074597" description="Ribosome-recycling factor">
    <location>
        <begin position="1"/>
        <end position="185"/>
    </location>
</feature>
<protein>
    <recommendedName>
        <fullName evidence="1">Ribosome-recycling factor</fullName>
        <shortName evidence="1">RRF</shortName>
    </recommendedName>
    <alternativeName>
        <fullName evidence="1">Ribosome-releasing factor</fullName>
    </alternativeName>
</protein>
<evidence type="ECO:0000255" key="1">
    <source>
        <dbReference type="HAMAP-Rule" id="MF_00040"/>
    </source>
</evidence>
<comment type="function">
    <text evidence="1">Responsible for the release of ribosomes from messenger RNA at the termination of protein biosynthesis. May increase the efficiency of translation by recycling ribosomes from one round of translation to another.</text>
</comment>
<comment type="subcellular location">
    <subcellularLocation>
        <location evidence="1">Cytoplasm</location>
    </subcellularLocation>
</comment>
<comment type="similarity">
    <text evidence="1">Belongs to the RRF family.</text>
</comment>
<keyword id="KW-0963">Cytoplasm</keyword>
<keyword id="KW-0648">Protein biosynthesis</keyword>
<keyword id="KW-1185">Reference proteome</keyword>
<name>RRF_SALAR</name>
<dbReference type="EMBL" id="CP000880">
    <property type="protein sequence ID" value="ABX22632.1"/>
    <property type="molecule type" value="Genomic_DNA"/>
</dbReference>
<dbReference type="SMR" id="A9MPI9"/>
<dbReference type="STRING" id="41514.SARI_02783"/>
<dbReference type="KEGG" id="ses:SARI_02783"/>
<dbReference type="HOGENOM" id="CLU_073981_2_1_6"/>
<dbReference type="Proteomes" id="UP000002084">
    <property type="component" value="Chromosome"/>
</dbReference>
<dbReference type="GO" id="GO:0005829">
    <property type="term" value="C:cytosol"/>
    <property type="evidence" value="ECO:0007669"/>
    <property type="project" value="GOC"/>
</dbReference>
<dbReference type="GO" id="GO:0043023">
    <property type="term" value="F:ribosomal large subunit binding"/>
    <property type="evidence" value="ECO:0007669"/>
    <property type="project" value="TreeGrafter"/>
</dbReference>
<dbReference type="GO" id="GO:0002184">
    <property type="term" value="P:cytoplasmic translational termination"/>
    <property type="evidence" value="ECO:0007669"/>
    <property type="project" value="TreeGrafter"/>
</dbReference>
<dbReference type="CDD" id="cd00520">
    <property type="entry name" value="RRF"/>
    <property type="match status" value="1"/>
</dbReference>
<dbReference type="FunFam" id="1.10.132.20:FF:000001">
    <property type="entry name" value="Ribosome-recycling factor"/>
    <property type="match status" value="1"/>
</dbReference>
<dbReference type="FunFam" id="3.30.1360.40:FF:000001">
    <property type="entry name" value="Ribosome-recycling factor"/>
    <property type="match status" value="1"/>
</dbReference>
<dbReference type="Gene3D" id="3.30.1360.40">
    <property type="match status" value="1"/>
</dbReference>
<dbReference type="Gene3D" id="1.10.132.20">
    <property type="entry name" value="Ribosome-recycling factor"/>
    <property type="match status" value="1"/>
</dbReference>
<dbReference type="HAMAP" id="MF_00040">
    <property type="entry name" value="RRF"/>
    <property type="match status" value="1"/>
</dbReference>
<dbReference type="InterPro" id="IPR002661">
    <property type="entry name" value="Ribosome_recyc_fac"/>
</dbReference>
<dbReference type="InterPro" id="IPR023584">
    <property type="entry name" value="Ribosome_recyc_fac_dom"/>
</dbReference>
<dbReference type="InterPro" id="IPR036191">
    <property type="entry name" value="RRF_sf"/>
</dbReference>
<dbReference type="NCBIfam" id="TIGR00496">
    <property type="entry name" value="frr"/>
    <property type="match status" value="1"/>
</dbReference>
<dbReference type="PANTHER" id="PTHR20982:SF3">
    <property type="entry name" value="MITOCHONDRIAL RIBOSOME RECYCLING FACTOR PSEUDO 1"/>
    <property type="match status" value="1"/>
</dbReference>
<dbReference type="PANTHER" id="PTHR20982">
    <property type="entry name" value="RIBOSOME RECYCLING FACTOR"/>
    <property type="match status" value="1"/>
</dbReference>
<dbReference type="Pfam" id="PF01765">
    <property type="entry name" value="RRF"/>
    <property type="match status" value="1"/>
</dbReference>
<dbReference type="SUPFAM" id="SSF55194">
    <property type="entry name" value="Ribosome recycling factor, RRF"/>
    <property type="match status" value="1"/>
</dbReference>